<evidence type="ECO:0000255" key="1"/>
<evidence type="ECO:0000269" key="2">
    <source>
    </source>
</evidence>
<evidence type="ECO:0000269" key="3">
    <source>
    </source>
</evidence>
<evidence type="ECO:0000269" key="4">
    <source>
    </source>
</evidence>
<evidence type="ECO:0000305" key="5"/>
<evidence type="ECO:0007829" key="6">
    <source>
        <dbReference type="PDB" id="2LW3"/>
    </source>
</evidence>
<gene>
    <name type="primary">mmpS4</name>
    <name type="ordered locus">Rv0451c</name>
    <name type="ORF">MTV037.15c</name>
</gene>
<accession>P9WJS9</accession>
<accession>L0T6P9</accession>
<accession>O53736</accession>
<accession>P0A5K2</accession>
<comment type="function">
    <text evidence="3">Part of an export system, which is required for biosynthesis and secretion of siderophores. Essential for virulence.</text>
</comment>
<comment type="subunit">
    <text evidence="3">Interacts with MmpL4. Can also interact with MmpL5.</text>
</comment>
<comment type="subcellular location">
    <subcellularLocation>
        <location evidence="3">Cell inner membrane</location>
        <topology evidence="1">Single-pass membrane protein</topology>
    </subcellularLocation>
</comment>
<comment type="induction">
    <text evidence="2 4">Transcriptionally regulated by MmpR5 (PubMed:24737322). Repressed by iron and IdeR (PubMed:12065475).</text>
</comment>
<comment type="disruption phenotype">
    <text evidence="3">Deletion mutant does not exhibit a low iron growth phenotype, but has attenuated virulence compared to the wild-type strain. Deletion of both mmpS4 and mmpS5 drastically decreases synthesis and secretion of siderophores, and greatly reduces virulence in mice.</text>
</comment>
<comment type="similarity">
    <text evidence="5">Belongs to the MmpS family.</text>
</comment>
<comment type="sequence caution" evidence="5">
    <conflict type="erroneous initiation">
        <sequence resource="EMBL-CDS" id="AAC26395"/>
    </conflict>
</comment>
<keyword id="KW-0002">3D-structure</keyword>
<keyword id="KW-0997">Cell inner membrane</keyword>
<keyword id="KW-1003">Cell membrane</keyword>
<keyword id="KW-0472">Membrane</keyword>
<keyword id="KW-1185">Reference proteome</keyword>
<keyword id="KW-0812">Transmembrane</keyword>
<keyword id="KW-1133">Transmembrane helix</keyword>
<keyword id="KW-0843">Virulence</keyword>
<protein>
    <recommendedName>
        <fullName evidence="5">Siderophore export accessory protein MmpS4</fullName>
    </recommendedName>
    <alternativeName>
        <fullName>PGB14T-X</fullName>
    </alternativeName>
</protein>
<proteinExistence type="evidence at protein level"/>
<organism>
    <name type="scientific">Mycobacterium tuberculosis (strain ATCC 25618 / H37Rv)</name>
    <dbReference type="NCBI Taxonomy" id="83332"/>
    <lineage>
        <taxon>Bacteria</taxon>
        <taxon>Bacillati</taxon>
        <taxon>Actinomycetota</taxon>
        <taxon>Actinomycetes</taxon>
        <taxon>Mycobacteriales</taxon>
        <taxon>Mycobacteriaceae</taxon>
        <taxon>Mycobacterium</taxon>
        <taxon>Mycobacterium tuberculosis complex</taxon>
    </lineage>
</organism>
<feature type="chain" id="PRO_0000216158" description="Siderophore export accessory protein MmpS4">
    <location>
        <begin position="1"/>
        <end position="140"/>
    </location>
</feature>
<feature type="transmembrane region" description="Helical" evidence="1">
    <location>
        <begin position="2"/>
        <end position="22"/>
    </location>
</feature>
<feature type="strand" evidence="6">
    <location>
        <begin position="52"/>
        <end position="54"/>
    </location>
</feature>
<feature type="strand" evidence="6">
    <location>
        <begin position="93"/>
        <end position="95"/>
    </location>
</feature>
<feature type="strand" evidence="6">
    <location>
        <begin position="133"/>
        <end position="135"/>
    </location>
</feature>
<sequence length="140" mass="15404">MLMRTWIPLVILVVVIVGGFTVHRIRGFFGSENRPSYSDTNLENSKPFNPKHLTYEIFGPPGTVADISYFDVNSEPQRVDGAVLPWSLHITTNDAAVMGNIVAQGNSDSIGCRITVDGKVRAERVSNEVNAYTYCLVKSA</sequence>
<reference key="1">
    <citation type="journal article" date="1998" name="Nature">
        <title>Deciphering the biology of Mycobacterium tuberculosis from the complete genome sequence.</title>
        <authorList>
            <person name="Cole S.T."/>
            <person name="Brosch R."/>
            <person name="Parkhill J."/>
            <person name="Garnier T."/>
            <person name="Churcher C.M."/>
            <person name="Harris D.E."/>
            <person name="Gordon S.V."/>
            <person name="Eiglmeier K."/>
            <person name="Gas S."/>
            <person name="Barry C.E. III"/>
            <person name="Tekaia F."/>
            <person name="Badcock K."/>
            <person name="Basham D."/>
            <person name="Brown D."/>
            <person name="Chillingworth T."/>
            <person name="Connor R."/>
            <person name="Davies R.M."/>
            <person name="Devlin K."/>
            <person name="Feltwell T."/>
            <person name="Gentles S."/>
            <person name="Hamlin N."/>
            <person name="Holroyd S."/>
            <person name="Hornsby T."/>
            <person name="Jagels K."/>
            <person name="Krogh A."/>
            <person name="McLean J."/>
            <person name="Moule S."/>
            <person name="Murphy L.D."/>
            <person name="Oliver S."/>
            <person name="Osborne J."/>
            <person name="Quail M.A."/>
            <person name="Rajandream M.A."/>
            <person name="Rogers J."/>
            <person name="Rutter S."/>
            <person name="Seeger K."/>
            <person name="Skelton S."/>
            <person name="Squares S."/>
            <person name="Squares R."/>
            <person name="Sulston J.E."/>
            <person name="Taylor K."/>
            <person name="Whitehead S."/>
            <person name="Barrell B.G."/>
        </authorList>
    </citation>
    <scope>NUCLEOTIDE SEQUENCE [LARGE SCALE GENOMIC DNA]</scope>
    <source>
        <strain>ATCC 25618 / H37Rv</strain>
    </source>
</reference>
<reference key="2">
    <citation type="journal article" date="1998" name="Microbiology">
        <title>Identification of Mycobacterium tuberculosis signal sequences that direct the export of a leaderless beta-lactamase gene product in Escherichia coli.</title>
        <authorList>
            <person name="Chubb A.J."/>
            <person name="Woodman Z.L."/>
            <person name="da Silva Tatley F.M.P.R."/>
            <person name="Hoffmann H.J."/>
            <person name="Scholle R.R."/>
            <person name="Ehlers M.R.W."/>
        </authorList>
    </citation>
    <scope>NUCLEOTIDE SEQUENCE [GENOMIC DNA] OF 1-25</scope>
    <source>
        <strain>ATCC 25618 / H37Rv</strain>
    </source>
</reference>
<reference key="3">
    <citation type="journal article" date="2002" name="Infect. Immun.">
        <title>IdeR, an essential gene in Mycobacterium tuberculosis: role of IdeR in iron-dependent gene expression, iron metabolism, and oxidative stress response.</title>
        <authorList>
            <person name="Rodriguez G.M."/>
            <person name="Voskuil M.I."/>
            <person name="Gold B."/>
            <person name="Schoolnik G.K."/>
            <person name="Smith I."/>
        </authorList>
    </citation>
    <scope>INDUCTION</scope>
    <source>
        <strain>H37Rv</strain>
    </source>
</reference>
<reference key="4">
    <citation type="journal article" date="2011" name="Mol. Cell. Proteomics">
        <title>Proteogenomic analysis of Mycobacterium tuberculosis by high resolution mass spectrometry.</title>
        <authorList>
            <person name="Kelkar D.S."/>
            <person name="Kumar D."/>
            <person name="Kumar P."/>
            <person name="Balakrishnan L."/>
            <person name="Muthusamy B."/>
            <person name="Yadav A.K."/>
            <person name="Shrivastava P."/>
            <person name="Marimuthu A."/>
            <person name="Anand S."/>
            <person name="Sundaram H."/>
            <person name="Kingsbury R."/>
            <person name="Harsha H.C."/>
            <person name="Nair B."/>
            <person name="Prasad T.S."/>
            <person name="Chauhan D.S."/>
            <person name="Katoch K."/>
            <person name="Katoch V.M."/>
            <person name="Kumar P."/>
            <person name="Chaerkady R."/>
            <person name="Ramachandran S."/>
            <person name="Dash D."/>
            <person name="Pandey A."/>
        </authorList>
    </citation>
    <scope>IDENTIFICATION BY MASS SPECTROMETRY [LARGE SCALE ANALYSIS]</scope>
    <source>
        <strain>ATCC 25618 / H37Rv</strain>
    </source>
</reference>
<reference key="5">
    <citation type="journal article" date="2014" name="J. Biol. Chem.">
        <title>Crystal structure of the transcriptional regulator Rv0678 of Mycobacterium tuberculosis.</title>
        <authorList>
            <person name="Radhakrishnan A."/>
            <person name="Kumar N."/>
            <person name="Wright C.C."/>
            <person name="Chou T.H."/>
            <person name="Tringides M.L."/>
            <person name="Bolla J.R."/>
            <person name="Lei H.T."/>
            <person name="Rajashankar K.R."/>
            <person name="Su C.C."/>
            <person name="Purdy G.E."/>
            <person name="Yu E.W."/>
        </authorList>
    </citation>
    <scope>INDUCTION</scope>
    <source>
        <strain>H37Rv</strain>
    </source>
</reference>
<reference key="6">
    <citation type="journal article" date="2013" name="PLoS Pathog.">
        <title>Discovery of a siderophore export system essential for virulence of Mycobacterium tuberculosis.</title>
        <authorList>
            <person name="Wells R.M."/>
            <person name="Jones C.M."/>
            <person name="Xi Z."/>
            <person name="Speer A."/>
            <person name="Danilchanka O."/>
            <person name="Doornbos K.S."/>
            <person name="Sun P."/>
            <person name="Wu F."/>
            <person name="Tian C."/>
            <person name="Niederweis M."/>
        </authorList>
    </citation>
    <scope>STRUCTURE BY NMR OF 52-140</scope>
    <scope>FUNCTION</scope>
    <scope>INTERACTION WITH MMPL4 AND MMPL5</scope>
    <scope>SUBCELLULAR LOCATION</scope>
    <scope>DISRUPTION PHENOTYPE</scope>
    <source>
        <strain>H37Rv</strain>
    </source>
</reference>
<dbReference type="EMBL" id="AL123456">
    <property type="protein sequence ID" value="CCP43182.1"/>
    <property type="molecule type" value="Genomic_DNA"/>
</dbReference>
<dbReference type="EMBL" id="AF017100">
    <property type="protein sequence ID" value="AAC26395.1"/>
    <property type="status" value="ALT_INIT"/>
    <property type="molecule type" value="Genomic_DNA"/>
</dbReference>
<dbReference type="PIR" id="D70831">
    <property type="entry name" value="D70831"/>
</dbReference>
<dbReference type="RefSeq" id="NP_214965.1">
    <property type="nucleotide sequence ID" value="NC_000962.3"/>
</dbReference>
<dbReference type="RefSeq" id="WP_003402272.1">
    <property type="nucleotide sequence ID" value="NZ_NVQJ01000002.1"/>
</dbReference>
<dbReference type="PDB" id="2LW3">
    <property type="method" value="NMR"/>
    <property type="chains" value="A=52-140"/>
</dbReference>
<dbReference type="PDBsum" id="2LW3"/>
<dbReference type="BMRB" id="P9WJS9"/>
<dbReference type="SMR" id="P9WJS9"/>
<dbReference type="STRING" id="83332.Rv0451c"/>
<dbReference type="PaxDb" id="83332-Rv0451c"/>
<dbReference type="DNASU" id="886321"/>
<dbReference type="GeneID" id="45424412"/>
<dbReference type="GeneID" id="886321"/>
<dbReference type="KEGG" id="mtu:Rv0451c"/>
<dbReference type="KEGG" id="mtv:RVBD_0451c"/>
<dbReference type="TubercuList" id="Rv0451c"/>
<dbReference type="eggNOG" id="ENOG50329VV">
    <property type="taxonomic scope" value="Bacteria"/>
</dbReference>
<dbReference type="InParanoid" id="P9WJS9"/>
<dbReference type="OrthoDB" id="3398257at2"/>
<dbReference type="PhylomeDB" id="P9WJS9"/>
<dbReference type="EvolutionaryTrace" id="P9WJS9"/>
<dbReference type="Proteomes" id="UP000001584">
    <property type="component" value="Chromosome"/>
</dbReference>
<dbReference type="GO" id="GO:0005886">
    <property type="term" value="C:plasma membrane"/>
    <property type="evidence" value="ECO:0007669"/>
    <property type="project" value="UniProtKB-SubCell"/>
</dbReference>
<dbReference type="Gene3D" id="2.60.40.2880">
    <property type="entry name" value="MmpS1-5, C-terminal soluble domain"/>
    <property type="match status" value="1"/>
</dbReference>
<dbReference type="InterPro" id="IPR008693">
    <property type="entry name" value="MmpS"/>
</dbReference>
<dbReference type="InterPro" id="IPR038468">
    <property type="entry name" value="MmpS_C"/>
</dbReference>
<dbReference type="Pfam" id="PF05423">
    <property type="entry name" value="Mycobact_memb"/>
    <property type="match status" value="1"/>
</dbReference>
<name>MMPS4_MYCTU</name>